<keyword id="KW-1003">Cell membrane</keyword>
<keyword id="KW-0325">Glycoprotein</keyword>
<keyword id="KW-0472">Membrane</keyword>
<keyword id="KW-1185">Reference proteome</keyword>
<keyword id="KW-0812">Transmembrane</keyword>
<keyword id="KW-1133">Transmembrane helix</keyword>
<keyword id="KW-0813">Transport</keyword>
<evidence type="ECO:0000255" key="1"/>
<evidence type="ECO:0000255" key="2">
    <source>
        <dbReference type="PROSITE-ProRule" id="PRU00498"/>
    </source>
</evidence>
<evidence type="ECO:0000256" key="3">
    <source>
        <dbReference type="SAM" id="MobiDB-lite"/>
    </source>
</evidence>
<evidence type="ECO:0000269" key="4">
    <source>
    </source>
</evidence>
<evidence type="ECO:0000303" key="5">
    <source>
    </source>
</evidence>
<evidence type="ECO:0000305" key="6"/>
<evidence type="ECO:0000305" key="7">
    <source>
    </source>
</evidence>
<organism>
    <name type="scientific">Aspergillus violaceofuscus (strain CBS 115571)</name>
    <dbReference type="NCBI Taxonomy" id="1450538"/>
    <lineage>
        <taxon>Eukaryota</taxon>
        <taxon>Fungi</taxon>
        <taxon>Dikarya</taxon>
        <taxon>Ascomycota</taxon>
        <taxon>Pezizomycotina</taxon>
        <taxon>Eurotiomycetes</taxon>
        <taxon>Eurotiomycetidae</taxon>
        <taxon>Eurotiales</taxon>
        <taxon>Aspergillaceae</taxon>
        <taxon>Aspergillus</taxon>
    </lineage>
</organism>
<reference key="1">
    <citation type="journal article" date="2020" name="Front. Microbiol.">
        <title>Discovery of pyranoviolin A and its biosynthetic gene cluster in Aspergillus violaceofuscus.</title>
        <authorList>
            <person name="Wei X."/>
            <person name="Chen L."/>
            <person name="Tang J.W."/>
            <person name="Matsuda Y."/>
        </authorList>
    </citation>
    <scope>NUCLEOTIDE SEQUENCE [GENOMIC DNA]</scope>
    <scope>FUNCTION</scope>
    <scope>PATHWAY</scope>
</reference>
<reference key="2">
    <citation type="submission" date="2018-02" db="EMBL/GenBank/DDBJ databases">
        <title>The genomes of Aspergillus section Nigri reveals drivers in fungal speciation.</title>
        <authorList>
            <consortium name="DOE Joint Genome Institute"/>
            <person name="Vesth T.C."/>
            <person name="Nybo J."/>
            <person name="Theobald S."/>
            <person name="Brandl J."/>
            <person name="Frisvad J.C."/>
            <person name="Nielsen K.F."/>
            <person name="Lyhne E.K."/>
            <person name="Kogle M.E."/>
            <person name="Kuo A."/>
            <person name="Riley R."/>
            <person name="Clum A."/>
            <person name="Nolan M."/>
            <person name="Lipzen A."/>
            <person name="Salamov A."/>
            <person name="Henrissat B."/>
            <person name="Wiebenga A."/>
            <person name="De vries R.P."/>
            <person name="Grigoriev I.V."/>
            <person name="Mortensen U.H."/>
            <person name="Andersen M.R."/>
            <person name="Baker S.E."/>
        </authorList>
    </citation>
    <scope>NUCLEOTIDE SEQUENCE [LARGE SCALE GENOMIC DNA]</scope>
    <source>
        <strain>CBS 115571</strain>
    </source>
</reference>
<name>PYVG_ASPV1</name>
<gene>
    <name evidence="5" type="primary">pyvG</name>
    <name type="ORF">BO99DRAFT_485677</name>
</gene>
<proteinExistence type="inferred from homology"/>
<dbReference type="EMBL" id="BR001648">
    <property type="protein sequence ID" value="FAA01297.1"/>
    <property type="molecule type" value="Genomic_DNA"/>
</dbReference>
<dbReference type="EMBL" id="KZ825234">
    <property type="protein sequence ID" value="PYI13688.1"/>
    <property type="molecule type" value="Genomic_DNA"/>
</dbReference>
<dbReference type="STRING" id="1450538.A0A2V5GRP3"/>
<dbReference type="GlyCosmos" id="A0A2V5GRP3">
    <property type="glycosylation" value="1 site, No reported glycans"/>
</dbReference>
<dbReference type="OMA" id="PWKINAL"/>
<dbReference type="Proteomes" id="UP000249829">
    <property type="component" value="Unassembled WGS sequence"/>
</dbReference>
<dbReference type="GO" id="GO:0005886">
    <property type="term" value="C:plasma membrane"/>
    <property type="evidence" value="ECO:0007669"/>
    <property type="project" value="UniProtKB-SubCell"/>
</dbReference>
<dbReference type="GO" id="GO:0015244">
    <property type="term" value="F:fluconazole transmembrane transporter activity"/>
    <property type="evidence" value="ECO:0007669"/>
    <property type="project" value="TreeGrafter"/>
</dbReference>
<dbReference type="GO" id="GO:1990961">
    <property type="term" value="P:xenobiotic detoxification by transmembrane export across the plasma membrane"/>
    <property type="evidence" value="ECO:0007669"/>
    <property type="project" value="TreeGrafter"/>
</dbReference>
<dbReference type="CDD" id="cd17323">
    <property type="entry name" value="MFS_Tpo1_MDR_like"/>
    <property type="match status" value="1"/>
</dbReference>
<dbReference type="Gene3D" id="1.20.1250.20">
    <property type="entry name" value="MFS general substrate transporter like domains"/>
    <property type="match status" value="1"/>
</dbReference>
<dbReference type="InterPro" id="IPR011701">
    <property type="entry name" value="MFS"/>
</dbReference>
<dbReference type="InterPro" id="IPR036259">
    <property type="entry name" value="MFS_trans_sf"/>
</dbReference>
<dbReference type="PANTHER" id="PTHR23502:SF23">
    <property type="entry name" value="FLUCONAZOLE RESISTANCE PROTEIN 1"/>
    <property type="match status" value="1"/>
</dbReference>
<dbReference type="PANTHER" id="PTHR23502">
    <property type="entry name" value="MAJOR FACILITATOR SUPERFAMILY"/>
    <property type="match status" value="1"/>
</dbReference>
<dbReference type="Pfam" id="PF07690">
    <property type="entry name" value="MFS_1"/>
    <property type="match status" value="1"/>
</dbReference>
<dbReference type="SUPFAM" id="SSF103473">
    <property type="entry name" value="MFS general substrate transporter"/>
    <property type="match status" value="1"/>
</dbReference>
<comment type="function">
    <text evidence="4 7">MFS-type transporter; part of the gene cluster that mediates the biosynthesis of pyranoviolin A, a pyranonigrin analog with a C-3 methoxy group (PubMed:33117309). May be involved in the secretion of pyranoviolin A (Probable).</text>
</comment>
<comment type="subcellular location">
    <subcellularLocation>
        <location evidence="6">Cell membrane</location>
        <topology evidence="1">Multi-pass membrane protein</topology>
    </subcellularLocation>
</comment>
<comment type="similarity">
    <text evidence="6">Belongs to the major facilitator superfamily. CAR1 family.</text>
</comment>
<sequence>MAHLLTNSPIGLLGRWLSGGRLLPPTEQQPGFQLPPPYRLAATRTQPQQQQEQEQEQEQAKPATRPPWNEPQITAEGAIQVGWYSSTDPDNPQNWSFGAKLLVYLEVNLITFMVYMSVAIFSAAEGEFRTVFGVSRSVTELGMSLYVLGYGTGPMIWSPLSEIPSVGRNPPYVVSVTIFLLLSIPTAVVNNVPGFLILRFLQGFFGSPGLATGGASIADVTGLTHLPYGLYVWAVCSIAGPAVAPVIAGFSVPVKGWHWSMWEVLWAAGGCFVFLLFLPETSGPAILHLRAQRLRALTGNPAFQSQSEIAVRDARPTQIVYDALVIPWKINALDPAILFTTVYIGLVYAIFYSYFEVLPRVYITMHAMTLGQLGLIFLGAIVGTLLVLPGYFAFTHWSLNADFRRGVWPRPEKRLVPALCGSVLVPVGLFLFAWTARPDLHWVVPTVGLVLEVAGMSLVIQCVFSYVAVAYLRYSASLFAINDLARAYLAFAAIMWSDPLYDRLGVARGTTLLAGLTVGCVGGMFTLYWWGPALRKRSRFASD</sequence>
<protein>
    <recommendedName>
        <fullName evidence="5">MFS-type transporter pyvG</fullName>
    </recommendedName>
    <alternativeName>
        <fullName evidence="5">Pyranoviolin A biosynthesis cluster protein G</fullName>
    </alternativeName>
</protein>
<accession>A0A2V5GRP3</accession>
<accession>A0A7M4B4V7</accession>
<feature type="chain" id="PRO_0000452821" description="MFS-type transporter pyvG">
    <location>
        <begin position="1"/>
        <end position="543"/>
    </location>
</feature>
<feature type="transmembrane region" description="Helical" evidence="1">
    <location>
        <begin position="101"/>
        <end position="121"/>
    </location>
</feature>
<feature type="transmembrane region" description="Helical" evidence="1">
    <location>
        <begin position="141"/>
        <end position="161"/>
    </location>
</feature>
<feature type="transmembrane region" description="Helical" evidence="1">
    <location>
        <begin position="178"/>
        <end position="198"/>
    </location>
</feature>
<feature type="transmembrane region" description="Helical" evidence="1">
    <location>
        <begin position="203"/>
        <end position="223"/>
    </location>
</feature>
<feature type="transmembrane region" description="Helical" evidence="1">
    <location>
        <begin position="230"/>
        <end position="250"/>
    </location>
</feature>
<feature type="transmembrane region" description="Helical" evidence="1">
    <location>
        <begin position="259"/>
        <end position="279"/>
    </location>
</feature>
<feature type="transmembrane region" description="Helical" evidence="1">
    <location>
        <begin position="335"/>
        <end position="355"/>
    </location>
</feature>
<feature type="transmembrane region" description="Helical" evidence="1">
    <location>
        <begin position="374"/>
        <end position="394"/>
    </location>
</feature>
<feature type="transmembrane region" description="Helical" evidence="1">
    <location>
        <begin position="415"/>
        <end position="435"/>
    </location>
</feature>
<feature type="transmembrane region" description="Helical" evidence="1">
    <location>
        <begin position="440"/>
        <end position="460"/>
    </location>
</feature>
<feature type="transmembrane region" description="Helical" evidence="1">
    <location>
        <begin position="476"/>
        <end position="496"/>
    </location>
</feature>
<feature type="transmembrane region" description="Helical" evidence="1">
    <location>
        <begin position="512"/>
        <end position="532"/>
    </location>
</feature>
<feature type="region of interest" description="Disordered" evidence="3">
    <location>
        <begin position="24"/>
        <end position="71"/>
    </location>
</feature>
<feature type="glycosylation site" description="N-linked (GlcNAc...) asparagine" evidence="2">
    <location>
        <position position="94"/>
    </location>
</feature>